<comment type="function">
    <text evidence="1">Involved in the biosynthesis of branched-chain amino acids (BCAA). Catalyzes an alkyl-migration followed by a ketol-acid reduction of (S)-2-acetolactate (S2AL) to yield (R)-2,3-dihydroxy-isovalerate. In the isomerase reaction, S2AL is rearranged via a Mg-dependent methyl migration to produce 3-hydroxy-3-methyl-2-ketobutyrate (HMKB). In the reductase reaction, this 2-ketoacid undergoes a metal-dependent reduction by NADPH to yield (R)-2,3-dihydroxy-isovalerate.</text>
</comment>
<comment type="catalytic activity">
    <reaction evidence="1">
        <text>(2R)-2,3-dihydroxy-3-methylbutanoate + NADP(+) = (2S)-2-acetolactate + NADPH + H(+)</text>
        <dbReference type="Rhea" id="RHEA:22068"/>
        <dbReference type="ChEBI" id="CHEBI:15378"/>
        <dbReference type="ChEBI" id="CHEBI:49072"/>
        <dbReference type="ChEBI" id="CHEBI:57783"/>
        <dbReference type="ChEBI" id="CHEBI:58349"/>
        <dbReference type="ChEBI" id="CHEBI:58476"/>
        <dbReference type="EC" id="1.1.1.86"/>
    </reaction>
</comment>
<comment type="catalytic activity">
    <reaction evidence="1">
        <text>(2R,3R)-2,3-dihydroxy-3-methylpentanoate + NADP(+) = (S)-2-ethyl-2-hydroxy-3-oxobutanoate + NADPH + H(+)</text>
        <dbReference type="Rhea" id="RHEA:13493"/>
        <dbReference type="ChEBI" id="CHEBI:15378"/>
        <dbReference type="ChEBI" id="CHEBI:49256"/>
        <dbReference type="ChEBI" id="CHEBI:49258"/>
        <dbReference type="ChEBI" id="CHEBI:57783"/>
        <dbReference type="ChEBI" id="CHEBI:58349"/>
        <dbReference type="EC" id="1.1.1.86"/>
    </reaction>
</comment>
<comment type="cofactor">
    <cofactor evidence="1">
        <name>Mg(2+)</name>
        <dbReference type="ChEBI" id="CHEBI:18420"/>
    </cofactor>
    <text evidence="1">Binds 2 magnesium ions per subunit.</text>
</comment>
<comment type="pathway">
    <text evidence="1">Amino-acid biosynthesis; L-isoleucine biosynthesis; L-isoleucine from 2-oxobutanoate: step 2/4.</text>
</comment>
<comment type="pathway">
    <text evidence="1">Amino-acid biosynthesis; L-valine biosynthesis; L-valine from pyruvate: step 2/4.</text>
</comment>
<comment type="similarity">
    <text evidence="1">Belongs to the ketol-acid reductoisomerase family.</text>
</comment>
<proteinExistence type="inferred from homology"/>
<gene>
    <name evidence="1" type="primary">ilvC</name>
    <name type="ordered locus">CLL_A0327</name>
</gene>
<dbReference type="EC" id="1.1.1.86" evidence="1"/>
<dbReference type="EMBL" id="CP001056">
    <property type="protein sequence ID" value="ACD23051.1"/>
    <property type="molecule type" value="Genomic_DNA"/>
</dbReference>
<dbReference type="SMR" id="B2TIR4"/>
<dbReference type="KEGG" id="cbk:CLL_A0327"/>
<dbReference type="PATRIC" id="fig|935198.13.peg.302"/>
<dbReference type="HOGENOM" id="CLU_033821_0_1_9"/>
<dbReference type="UniPathway" id="UPA00047">
    <property type="reaction ID" value="UER00056"/>
</dbReference>
<dbReference type="UniPathway" id="UPA00049">
    <property type="reaction ID" value="UER00060"/>
</dbReference>
<dbReference type="Proteomes" id="UP000001195">
    <property type="component" value="Chromosome"/>
</dbReference>
<dbReference type="GO" id="GO:0005829">
    <property type="term" value="C:cytosol"/>
    <property type="evidence" value="ECO:0007669"/>
    <property type="project" value="TreeGrafter"/>
</dbReference>
<dbReference type="GO" id="GO:0004455">
    <property type="term" value="F:ketol-acid reductoisomerase activity"/>
    <property type="evidence" value="ECO:0007669"/>
    <property type="project" value="UniProtKB-UniRule"/>
</dbReference>
<dbReference type="GO" id="GO:0000287">
    <property type="term" value="F:magnesium ion binding"/>
    <property type="evidence" value="ECO:0007669"/>
    <property type="project" value="UniProtKB-UniRule"/>
</dbReference>
<dbReference type="GO" id="GO:0050661">
    <property type="term" value="F:NADP binding"/>
    <property type="evidence" value="ECO:0007669"/>
    <property type="project" value="InterPro"/>
</dbReference>
<dbReference type="GO" id="GO:0009097">
    <property type="term" value="P:isoleucine biosynthetic process"/>
    <property type="evidence" value="ECO:0007669"/>
    <property type="project" value="UniProtKB-UniRule"/>
</dbReference>
<dbReference type="GO" id="GO:0009099">
    <property type="term" value="P:L-valine biosynthetic process"/>
    <property type="evidence" value="ECO:0007669"/>
    <property type="project" value="UniProtKB-UniRule"/>
</dbReference>
<dbReference type="FunFam" id="3.40.50.720:FF:000023">
    <property type="entry name" value="Ketol-acid reductoisomerase (NADP(+))"/>
    <property type="match status" value="1"/>
</dbReference>
<dbReference type="Gene3D" id="6.10.240.10">
    <property type="match status" value="1"/>
</dbReference>
<dbReference type="Gene3D" id="3.40.50.720">
    <property type="entry name" value="NAD(P)-binding Rossmann-like Domain"/>
    <property type="match status" value="1"/>
</dbReference>
<dbReference type="HAMAP" id="MF_00435">
    <property type="entry name" value="IlvC"/>
    <property type="match status" value="1"/>
</dbReference>
<dbReference type="InterPro" id="IPR008927">
    <property type="entry name" value="6-PGluconate_DH-like_C_sf"/>
</dbReference>
<dbReference type="InterPro" id="IPR013023">
    <property type="entry name" value="KARI"/>
</dbReference>
<dbReference type="InterPro" id="IPR000506">
    <property type="entry name" value="KARI_C"/>
</dbReference>
<dbReference type="InterPro" id="IPR013116">
    <property type="entry name" value="KARI_N"/>
</dbReference>
<dbReference type="InterPro" id="IPR014359">
    <property type="entry name" value="KARI_prok"/>
</dbReference>
<dbReference type="InterPro" id="IPR036291">
    <property type="entry name" value="NAD(P)-bd_dom_sf"/>
</dbReference>
<dbReference type="NCBIfam" id="TIGR00465">
    <property type="entry name" value="ilvC"/>
    <property type="match status" value="1"/>
</dbReference>
<dbReference type="NCBIfam" id="NF004017">
    <property type="entry name" value="PRK05479.1"/>
    <property type="match status" value="1"/>
</dbReference>
<dbReference type="NCBIfam" id="NF009940">
    <property type="entry name" value="PRK13403.1"/>
    <property type="match status" value="1"/>
</dbReference>
<dbReference type="PANTHER" id="PTHR21371">
    <property type="entry name" value="KETOL-ACID REDUCTOISOMERASE, MITOCHONDRIAL"/>
    <property type="match status" value="1"/>
</dbReference>
<dbReference type="PANTHER" id="PTHR21371:SF1">
    <property type="entry name" value="KETOL-ACID REDUCTOISOMERASE, MITOCHONDRIAL"/>
    <property type="match status" value="1"/>
</dbReference>
<dbReference type="Pfam" id="PF01450">
    <property type="entry name" value="KARI_C"/>
    <property type="match status" value="1"/>
</dbReference>
<dbReference type="Pfam" id="PF07991">
    <property type="entry name" value="KARI_N"/>
    <property type="match status" value="1"/>
</dbReference>
<dbReference type="PIRSF" id="PIRSF000116">
    <property type="entry name" value="IlvC_gammaproteo"/>
    <property type="match status" value="1"/>
</dbReference>
<dbReference type="SUPFAM" id="SSF48179">
    <property type="entry name" value="6-phosphogluconate dehydrogenase C-terminal domain-like"/>
    <property type="match status" value="1"/>
</dbReference>
<dbReference type="SUPFAM" id="SSF51735">
    <property type="entry name" value="NAD(P)-binding Rossmann-fold domains"/>
    <property type="match status" value="1"/>
</dbReference>
<dbReference type="PROSITE" id="PS51851">
    <property type="entry name" value="KARI_C"/>
    <property type="match status" value="1"/>
</dbReference>
<dbReference type="PROSITE" id="PS51850">
    <property type="entry name" value="KARI_N"/>
    <property type="match status" value="1"/>
</dbReference>
<sequence>MTKMYYEEDTDLNLLKGKTIAVIGYGSQGHAHALNAKESGGNVIIGLYEGSKSWAKAEAQGFEVFSTAEAAKKADIIMILINDELQAAMYKKDIAPNLEAGNMLMFAHGFNIHFDQITAPNDVDVTMIAPKGPGHTVRSEYQLGKGVPCLVAVHQDATGRALETALAYANAIGGARAGVLETTFRTETETDLFGEQAVLCGGVCALMQAGFETLVEAGYDERNAYFECIHEMKLIVDLIYQSGFAGMRYSISNTAEYGDYITGSKIITEETKKTMKKVLKDIQDGTFAKDFLLDMSEAGGQAHFKAMRKLAAEHQSEAVGSEIRKLYCWNNEDKLINN</sequence>
<evidence type="ECO:0000255" key="1">
    <source>
        <dbReference type="HAMAP-Rule" id="MF_00435"/>
    </source>
</evidence>
<evidence type="ECO:0000255" key="2">
    <source>
        <dbReference type="PROSITE-ProRule" id="PRU01197"/>
    </source>
</evidence>
<evidence type="ECO:0000255" key="3">
    <source>
        <dbReference type="PROSITE-ProRule" id="PRU01198"/>
    </source>
</evidence>
<feature type="chain" id="PRO_1000190934" description="Ketol-acid reductoisomerase (NADP(+))">
    <location>
        <begin position="1"/>
        <end position="338"/>
    </location>
</feature>
<feature type="domain" description="KARI N-terminal Rossmann" evidence="2">
    <location>
        <begin position="2"/>
        <end position="182"/>
    </location>
</feature>
<feature type="domain" description="KARI C-terminal knotted" evidence="3">
    <location>
        <begin position="183"/>
        <end position="330"/>
    </location>
</feature>
<feature type="active site" evidence="1">
    <location>
        <position position="108"/>
    </location>
</feature>
<feature type="binding site" evidence="1">
    <location>
        <begin position="25"/>
        <end position="28"/>
    </location>
    <ligand>
        <name>NADP(+)</name>
        <dbReference type="ChEBI" id="CHEBI:58349"/>
    </ligand>
</feature>
<feature type="binding site" evidence="1">
    <location>
        <position position="51"/>
    </location>
    <ligand>
        <name>NADP(+)</name>
        <dbReference type="ChEBI" id="CHEBI:58349"/>
    </ligand>
</feature>
<feature type="binding site" evidence="1">
    <location>
        <position position="53"/>
    </location>
    <ligand>
        <name>NADP(+)</name>
        <dbReference type="ChEBI" id="CHEBI:58349"/>
    </ligand>
</feature>
<feature type="binding site" evidence="1">
    <location>
        <begin position="83"/>
        <end position="86"/>
    </location>
    <ligand>
        <name>NADP(+)</name>
        <dbReference type="ChEBI" id="CHEBI:58349"/>
    </ligand>
</feature>
<feature type="binding site" evidence="1">
    <location>
        <position position="134"/>
    </location>
    <ligand>
        <name>NADP(+)</name>
        <dbReference type="ChEBI" id="CHEBI:58349"/>
    </ligand>
</feature>
<feature type="binding site" evidence="1">
    <location>
        <position position="191"/>
    </location>
    <ligand>
        <name>Mg(2+)</name>
        <dbReference type="ChEBI" id="CHEBI:18420"/>
        <label>1</label>
    </ligand>
</feature>
<feature type="binding site" evidence="1">
    <location>
        <position position="191"/>
    </location>
    <ligand>
        <name>Mg(2+)</name>
        <dbReference type="ChEBI" id="CHEBI:18420"/>
        <label>2</label>
    </ligand>
</feature>
<feature type="binding site" evidence="1">
    <location>
        <position position="195"/>
    </location>
    <ligand>
        <name>Mg(2+)</name>
        <dbReference type="ChEBI" id="CHEBI:18420"/>
        <label>1</label>
    </ligand>
</feature>
<feature type="binding site" evidence="1">
    <location>
        <position position="227"/>
    </location>
    <ligand>
        <name>Mg(2+)</name>
        <dbReference type="ChEBI" id="CHEBI:18420"/>
        <label>2</label>
    </ligand>
</feature>
<feature type="binding site" evidence="1">
    <location>
        <position position="231"/>
    </location>
    <ligand>
        <name>Mg(2+)</name>
        <dbReference type="ChEBI" id="CHEBI:18420"/>
        <label>2</label>
    </ligand>
</feature>
<feature type="binding site" evidence="1">
    <location>
        <position position="252"/>
    </location>
    <ligand>
        <name>substrate</name>
    </ligand>
</feature>
<keyword id="KW-0028">Amino-acid biosynthesis</keyword>
<keyword id="KW-0100">Branched-chain amino acid biosynthesis</keyword>
<keyword id="KW-0460">Magnesium</keyword>
<keyword id="KW-0479">Metal-binding</keyword>
<keyword id="KW-0521">NADP</keyword>
<keyword id="KW-0560">Oxidoreductase</keyword>
<organism>
    <name type="scientific">Clostridium botulinum (strain Eklund 17B / Type B)</name>
    <dbReference type="NCBI Taxonomy" id="935198"/>
    <lineage>
        <taxon>Bacteria</taxon>
        <taxon>Bacillati</taxon>
        <taxon>Bacillota</taxon>
        <taxon>Clostridia</taxon>
        <taxon>Eubacteriales</taxon>
        <taxon>Clostridiaceae</taxon>
        <taxon>Clostridium</taxon>
    </lineage>
</organism>
<protein>
    <recommendedName>
        <fullName evidence="1">Ketol-acid reductoisomerase (NADP(+))</fullName>
        <shortName evidence="1">KARI</shortName>
        <ecNumber evidence="1">1.1.1.86</ecNumber>
    </recommendedName>
    <alternativeName>
        <fullName evidence="1">Acetohydroxy-acid isomeroreductase</fullName>
        <shortName evidence="1">AHIR</shortName>
    </alternativeName>
    <alternativeName>
        <fullName evidence="1">Alpha-keto-beta-hydroxylacyl reductoisomerase</fullName>
    </alternativeName>
    <alternativeName>
        <fullName evidence="1">Ketol-acid reductoisomerase type 1</fullName>
    </alternativeName>
    <alternativeName>
        <fullName evidence="1">Ketol-acid reductoisomerase type I</fullName>
    </alternativeName>
</protein>
<reference key="1">
    <citation type="submission" date="2008-04" db="EMBL/GenBank/DDBJ databases">
        <title>Complete sequence of Clostridium botulinum strain Eklund.</title>
        <authorList>
            <person name="Brinkac L.M."/>
            <person name="Brown J.L."/>
            <person name="Bruce D."/>
            <person name="Detter C."/>
            <person name="Munk C."/>
            <person name="Smith L.A."/>
            <person name="Smith T.J."/>
            <person name="Sutton G."/>
            <person name="Brettin T.S."/>
        </authorList>
    </citation>
    <scope>NUCLEOTIDE SEQUENCE [LARGE SCALE GENOMIC DNA]</scope>
    <source>
        <strain>Eklund 17B / Type B</strain>
    </source>
</reference>
<accession>B2TIR4</accession>
<name>ILVC_CLOBB</name>